<reference key="1">
    <citation type="journal article" date="1999" name="FEMS Microbiol. Lett.">
        <title>Organization of the genes involved in the ribulose monophosphate pathway in an obligate methylotrophic bacterium, Methylomonas aminofaciens 77a.</title>
        <authorList>
            <person name="Sakai Y."/>
            <person name="Mitsui R."/>
            <person name="Katayama Y."/>
            <person name="Yanase H."/>
            <person name="Kato N."/>
        </authorList>
    </citation>
    <scope>NUCLEOTIDE SEQUENCE [GENOMIC DNA]</scope>
    <source>
        <strain>77a</strain>
    </source>
</reference>
<name>TAL_METAM</name>
<proteinExistence type="inferred from homology"/>
<dbReference type="EC" id="2.2.1.2" evidence="1"/>
<dbReference type="EMBL" id="AB026428">
    <property type="protein sequence ID" value="BAA83095.1"/>
    <property type="molecule type" value="Genomic_DNA"/>
</dbReference>
<dbReference type="SMR" id="Q9S0X4"/>
<dbReference type="UniPathway" id="UPA00115">
    <property type="reaction ID" value="UER00414"/>
</dbReference>
<dbReference type="GO" id="GO:0005829">
    <property type="term" value="C:cytosol"/>
    <property type="evidence" value="ECO:0007669"/>
    <property type="project" value="TreeGrafter"/>
</dbReference>
<dbReference type="GO" id="GO:0004801">
    <property type="term" value="F:transaldolase activity"/>
    <property type="evidence" value="ECO:0000250"/>
    <property type="project" value="UniProtKB"/>
</dbReference>
<dbReference type="GO" id="GO:0005975">
    <property type="term" value="P:carbohydrate metabolic process"/>
    <property type="evidence" value="ECO:0007669"/>
    <property type="project" value="InterPro"/>
</dbReference>
<dbReference type="GO" id="GO:0006098">
    <property type="term" value="P:pentose-phosphate shunt"/>
    <property type="evidence" value="ECO:0007669"/>
    <property type="project" value="UniProtKB-UniRule"/>
</dbReference>
<dbReference type="CDD" id="cd00957">
    <property type="entry name" value="Transaldolase_TalAB"/>
    <property type="match status" value="1"/>
</dbReference>
<dbReference type="FunFam" id="3.20.20.70:FF:000002">
    <property type="entry name" value="Transaldolase"/>
    <property type="match status" value="1"/>
</dbReference>
<dbReference type="Gene3D" id="3.20.20.70">
    <property type="entry name" value="Aldolase class I"/>
    <property type="match status" value="1"/>
</dbReference>
<dbReference type="HAMAP" id="MF_00492">
    <property type="entry name" value="Transaldolase_1"/>
    <property type="match status" value="1"/>
</dbReference>
<dbReference type="InterPro" id="IPR013785">
    <property type="entry name" value="Aldolase_TIM"/>
</dbReference>
<dbReference type="InterPro" id="IPR001585">
    <property type="entry name" value="TAL/FSA"/>
</dbReference>
<dbReference type="InterPro" id="IPR004730">
    <property type="entry name" value="Transaldolase_1"/>
</dbReference>
<dbReference type="InterPro" id="IPR018225">
    <property type="entry name" value="Transaldolase_AS"/>
</dbReference>
<dbReference type="NCBIfam" id="NF009001">
    <property type="entry name" value="PRK12346.1"/>
    <property type="match status" value="1"/>
</dbReference>
<dbReference type="NCBIfam" id="TIGR00874">
    <property type="entry name" value="talAB"/>
    <property type="match status" value="1"/>
</dbReference>
<dbReference type="PANTHER" id="PTHR10683">
    <property type="entry name" value="TRANSALDOLASE"/>
    <property type="match status" value="1"/>
</dbReference>
<dbReference type="PANTHER" id="PTHR10683:SF18">
    <property type="entry name" value="TRANSALDOLASE"/>
    <property type="match status" value="1"/>
</dbReference>
<dbReference type="Pfam" id="PF00923">
    <property type="entry name" value="TAL_FSA"/>
    <property type="match status" value="1"/>
</dbReference>
<dbReference type="SUPFAM" id="SSF51569">
    <property type="entry name" value="Aldolase"/>
    <property type="match status" value="1"/>
</dbReference>
<dbReference type="PROSITE" id="PS01054">
    <property type="entry name" value="TRANSALDOLASE_1"/>
    <property type="match status" value="1"/>
</dbReference>
<dbReference type="PROSITE" id="PS00958">
    <property type="entry name" value="TRANSALDOLASE_2"/>
    <property type="match status" value="1"/>
</dbReference>
<gene>
    <name evidence="1" type="primary">tal</name>
    <name type="synonym">rmpD</name>
</gene>
<feature type="chain" id="PRO_0000173600" description="Transaldolase">
    <location>
        <begin position="1"/>
        <end position="316"/>
    </location>
</feature>
<feature type="active site" description="Schiff-base intermediate with substrate" evidence="1">
    <location>
        <position position="132"/>
    </location>
</feature>
<sequence>MANLFDQLKEFTTIVADTGDVEAIKSVKPYDATTNPSLLLKASTLPQYAPLIDEAIAYAKSQSGDKAQQIEDAADKLAVLIGQEILKHIPGKISTEVDARLSFDTDAMVQKGRKLIKLYADAGISKDRVLIKLASTWEGIKAGEILEKEGINCNLTLLFSFAQARACAEAGVFLISPFVGRILDWYKAKTGENYTSETDPGVLSVRKIYAYYKEHGYKTVVMGASFRNTGEITALAGCDRLTVSPNLLERAEGYRRYLPRVLVDNGATKQRPALLTEKEFRFDQNEDAMATEKLAEGIRGFVVDQNKLEKALAEKL</sequence>
<keyword id="KW-0963">Cytoplasm</keyword>
<keyword id="KW-0570">Pentose shunt</keyword>
<keyword id="KW-0704">Schiff base</keyword>
<keyword id="KW-0808">Transferase</keyword>
<evidence type="ECO:0000255" key="1">
    <source>
        <dbReference type="HAMAP-Rule" id="MF_00492"/>
    </source>
</evidence>
<evidence type="ECO:0000305" key="2"/>
<protein>
    <recommendedName>
        <fullName evidence="1">Transaldolase</fullName>
        <ecNumber evidence="1">2.2.1.2</ecNumber>
    </recommendedName>
</protein>
<accession>Q9S0X4</accession>
<comment type="function">
    <text evidence="1">Transaldolase is important for the balance of metabolites in the pentose-phosphate pathway.</text>
</comment>
<comment type="catalytic activity">
    <reaction evidence="1">
        <text>D-sedoheptulose 7-phosphate + D-glyceraldehyde 3-phosphate = D-erythrose 4-phosphate + beta-D-fructose 6-phosphate</text>
        <dbReference type="Rhea" id="RHEA:17053"/>
        <dbReference type="ChEBI" id="CHEBI:16897"/>
        <dbReference type="ChEBI" id="CHEBI:57483"/>
        <dbReference type="ChEBI" id="CHEBI:57634"/>
        <dbReference type="ChEBI" id="CHEBI:59776"/>
        <dbReference type="EC" id="2.2.1.2"/>
    </reaction>
</comment>
<comment type="pathway">
    <text evidence="1">Carbohydrate degradation; pentose phosphate pathway; D-glyceraldehyde 3-phosphate and beta-D-fructose 6-phosphate from D-ribose 5-phosphate and D-xylulose 5-phosphate (non-oxidative stage): step 2/3.</text>
</comment>
<comment type="subcellular location">
    <subcellularLocation>
        <location evidence="1">Cytoplasm</location>
    </subcellularLocation>
</comment>
<comment type="similarity">
    <text evidence="1 2">Belongs to the transaldolase family. Type 1 subfamily.</text>
</comment>
<organism>
    <name type="scientific">Methylomonas aminofaciens</name>
    <dbReference type="NCBI Taxonomy" id="46896"/>
    <lineage>
        <taxon>Bacteria</taxon>
        <taxon>Pseudomonadati</taxon>
        <taxon>Pseudomonadota</taxon>
        <taxon>Gammaproteobacteria</taxon>
        <taxon>Methylococcales</taxon>
        <taxon>Methylococcaceae</taxon>
        <taxon>Methylomonas</taxon>
    </lineage>
</organism>